<evidence type="ECO:0000269" key="1">
    <source>
    </source>
</evidence>
<evidence type="ECO:0000305" key="2"/>
<protein>
    <recommendedName>
        <fullName>L-rhamnono-gamma-lactonase</fullName>
        <ecNumber>3.1.1.65</ecNumber>
    </recommendedName>
</protein>
<reference key="1">
    <citation type="journal article" date="2007" name="Nat. Biotechnol.">
        <title>Genome sequence of the lignocellulose-bioconverting and xylose-fermenting yeast Pichia stipitis.</title>
        <authorList>
            <person name="Jeffries T.W."/>
            <person name="Grigoriev I.V."/>
            <person name="Grimwood J."/>
            <person name="Laplaza J.M."/>
            <person name="Aerts A."/>
            <person name="Salamov A."/>
            <person name="Schmutz J."/>
            <person name="Lindquist E."/>
            <person name="Dehal P."/>
            <person name="Shapiro H."/>
            <person name="Jin Y.-S."/>
            <person name="Passoth V."/>
            <person name="Richardson P.M."/>
        </authorList>
    </citation>
    <scope>NUCLEOTIDE SEQUENCE [LARGE SCALE GENOMIC DNA]</scope>
    <source>
        <strain>ATCC 58785 / CBS 6054 / NBRC 10063 / NRRL Y-11545</strain>
    </source>
</reference>
<reference key="2">
    <citation type="journal article" date="2008" name="J. Biol. Chem.">
        <title>Eukaryotic and bacterial gene clusters related to an alternative pathway of nonphosphorylated L-rhamnose metabolism.</title>
        <authorList>
            <person name="Watanabe S."/>
            <person name="Saimura M."/>
            <person name="Makino K."/>
        </authorList>
    </citation>
    <scope>CATALYTIC ACTIVITY</scope>
    <scope>FUNCTION</scope>
    <scope>ACTIVITY REGULATION</scope>
    <scope>COFACTOR</scope>
    <scope>IDENTIFICATION IN GENE CLUSTER</scope>
</reference>
<sequence length="336" mass="38836">MSKYKILDSHIHLYSLANIPLLHWDEGNPLHGNRRLDEYIENSQSTQFDVEGVVWIECDAKIDLTQGLKGLENPIEEYLYICRNINGKLLPEEGVSTPFKRRLIKAMIPFAPMPLGSAGVEEYVKALKTRNSSEFHLVKGFRYLIQDKPPLTISDPHFVSSFQWLDSNGYVFDLGIDMRSGGLWQFKETLEVFKKVPNLKYIINHLTKPCLDFDPETIDSNPDFLSWKRLVTEMYITTPNSYMKLSGGFSEVEQDVALDVTSTSRHVYPWFKVVYELWGPERTIFASNWPVCAIPAGQNLTEKWFQVCETLFDSIGMDEDTRRKIYYSNAFKAYNI</sequence>
<proteinExistence type="evidence at protein level"/>
<feature type="chain" id="PRO_0000418399" description="L-rhamnono-gamma-lactonase">
    <location>
        <begin position="1"/>
        <end position="336"/>
    </location>
</feature>
<keyword id="KW-0378">Hydrolase</keyword>
<keyword id="KW-0479">Metal-binding</keyword>
<keyword id="KW-1185">Reference proteome</keyword>
<keyword id="KW-0684">Rhamnose metabolism</keyword>
<comment type="function">
    <text evidence="1">Hydrolase with high substrate specificity for L-rhamnono-1,4-lactone. Catalyzes the second step in an alternative pathway for rhamnose utilization that does not involve phosphorylated intermediates.</text>
</comment>
<comment type="catalytic activity">
    <reaction evidence="1">
        <text>L-rhamnono-1,4-lactone + H2O = L-rhamnonate + H(+)</text>
        <dbReference type="Rhea" id="RHEA:10288"/>
        <dbReference type="ChEBI" id="CHEBI:15377"/>
        <dbReference type="ChEBI" id="CHEBI:15378"/>
        <dbReference type="ChEBI" id="CHEBI:17937"/>
        <dbReference type="ChEBI" id="CHEBI:58118"/>
        <dbReference type="EC" id="3.1.1.65"/>
    </reaction>
</comment>
<comment type="cofactor">
    <cofactor evidence="2">
        <name>a divalent metal cation</name>
        <dbReference type="ChEBI" id="CHEBI:60240"/>
    </cofactor>
    <text evidence="2">Divalent metal cation.</text>
</comment>
<comment type="activity regulation">
    <text evidence="1">Inhibited by Zn(2+), Fe(2+) and Cu(2+), but not by EDTA.</text>
</comment>
<comment type="miscellaneous">
    <text>Part of gene cluster that contains the genes for this rhamnose catabolic pathway.</text>
</comment>
<comment type="similarity">
    <text evidence="2">Belongs to the metallo-dependent hydrolases superfamily.</text>
</comment>
<accession>A3LZU8</accession>
<name>RMGL_PICST</name>
<dbReference type="EC" id="3.1.1.65"/>
<dbReference type="EMBL" id="CP000502">
    <property type="protein sequence ID" value="ABN68602.2"/>
    <property type="molecule type" value="Genomic_DNA"/>
</dbReference>
<dbReference type="RefSeq" id="XP_001386631.2">
    <property type="nucleotide sequence ID" value="XM_001386594.1"/>
</dbReference>
<dbReference type="SMR" id="A3LZU8"/>
<dbReference type="STRING" id="322104.A3LZU8"/>
<dbReference type="GeneID" id="4840982"/>
<dbReference type="KEGG" id="pic:PICST_63908"/>
<dbReference type="eggNOG" id="ENOG502RZT7">
    <property type="taxonomic scope" value="Eukaryota"/>
</dbReference>
<dbReference type="HOGENOM" id="CLU_044590_1_0_1"/>
<dbReference type="InParanoid" id="A3LZU8"/>
<dbReference type="OMA" id="IAWRTAM"/>
<dbReference type="OrthoDB" id="2135488at2759"/>
<dbReference type="Proteomes" id="UP000002258">
    <property type="component" value="Chromosome 8"/>
</dbReference>
<dbReference type="GO" id="GO:0016787">
    <property type="term" value="F:hydrolase activity"/>
    <property type="evidence" value="ECO:0000314"/>
    <property type="project" value="UniProtKB"/>
</dbReference>
<dbReference type="GO" id="GO:0050033">
    <property type="term" value="F:L-rhamnono-1,4-lactonase activity"/>
    <property type="evidence" value="ECO:0007669"/>
    <property type="project" value="UniProtKB-EC"/>
</dbReference>
<dbReference type="GO" id="GO:0046872">
    <property type="term" value="F:metal ion binding"/>
    <property type="evidence" value="ECO:0007669"/>
    <property type="project" value="UniProtKB-KW"/>
</dbReference>
<dbReference type="GO" id="GO:0019301">
    <property type="term" value="P:rhamnose catabolic process"/>
    <property type="evidence" value="ECO:0000314"/>
    <property type="project" value="UniProtKB"/>
</dbReference>
<dbReference type="FunFam" id="3.20.20.140:FF:000332">
    <property type="entry name" value="L-rhamnono-gamma-lactonase"/>
    <property type="match status" value="1"/>
</dbReference>
<dbReference type="Gene3D" id="3.20.20.140">
    <property type="entry name" value="Metal-dependent hydrolases"/>
    <property type="match status" value="1"/>
</dbReference>
<dbReference type="InterPro" id="IPR006680">
    <property type="entry name" value="Amidohydro-rel"/>
</dbReference>
<dbReference type="InterPro" id="IPR032466">
    <property type="entry name" value="Metal_Hydrolase"/>
</dbReference>
<dbReference type="InterPro" id="IPR052350">
    <property type="entry name" value="Metallo-dep_Lactonases"/>
</dbReference>
<dbReference type="PANTHER" id="PTHR43569">
    <property type="entry name" value="AMIDOHYDROLASE"/>
    <property type="match status" value="1"/>
</dbReference>
<dbReference type="PANTHER" id="PTHR43569:SF2">
    <property type="entry name" value="AMIDOHYDROLASE-RELATED DOMAIN-CONTAINING PROTEIN"/>
    <property type="match status" value="1"/>
</dbReference>
<dbReference type="Pfam" id="PF04909">
    <property type="entry name" value="Amidohydro_2"/>
    <property type="match status" value="1"/>
</dbReference>
<dbReference type="SUPFAM" id="SSF51556">
    <property type="entry name" value="Metallo-dependent hydrolases"/>
    <property type="match status" value="1"/>
</dbReference>
<gene>
    <name type="primary">LRA2</name>
    <name type="ORF">PICST_63908</name>
</gene>
<organism>
    <name type="scientific">Scheffersomyces stipitis (strain ATCC 58785 / CBS 6054 / NBRC 10063 / NRRL Y-11545)</name>
    <name type="common">Yeast</name>
    <name type="synonym">Pichia stipitis</name>
    <dbReference type="NCBI Taxonomy" id="322104"/>
    <lineage>
        <taxon>Eukaryota</taxon>
        <taxon>Fungi</taxon>
        <taxon>Dikarya</taxon>
        <taxon>Ascomycota</taxon>
        <taxon>Saccharomycotina</taxon>
        <taxon>Pichiomycetes</taxon>
        <taxon>Debaryomycetaceae</taxon>
        <taxon>Scheffersomyces</taxon>
    </lineage>
</organism>